<name>SYFA_BRUME</name>
<proteinExistence type="inferred from homology"/>
<organism>
    <name type="scientific">Brucella melitensis biotype 1 (strain ATCC 23456 / CCUG 17765 / NCTC 10094 / 16M)</name>
    <dbReference type="NCBI Taxonomy" id="224914"/>
    <lineage>
        <taxon>Bacteria</taxon>
        <taxon>Pseudomonadati</taxon>
        <taxon>Pseudomonadota</taxon>
        <taxon>Alphaproteobacteria</taxon>
        <taxon>Hyphomicrobiales</taxon>
        <taxon>Brucellaceae</taxon>
        <taxon>Brucella/Ochrobactrum group</taxon>
        <taxon>Brucella</taxon>
    </lineage>
</organism>
<sequence>MSDLEQLERQILEDIAAAVDEQGIEAVRVAALGKKGTVSEKLKTLGGMSPEERQMQGPAINGLKNRVTEALSERRTELRKAAVAARLEREKVDVTLPVRESAASRGRIHPISQVIDEITAIFADMGFSIAEGPDIETDYYNFTALNFPEGHPAREMHDTFFFNPDEKGERKLLRTHTSPVQVHTMEKFAAMRDKEGRDEPIRIVIPGKTYRMDSDATHSPMFHQVEGLVVDKSANVANMKWVLEEFCKAFFEVPSVKMRMRPSFFPFTEPSVEVDIQCDRSGPHVKFGEGNDWLEILGCGMVHPNVLRMSGYDPEVYQGFAWGMGIGRIAMLKYGMPDLRAFFDADVRWIEHYGFRPLDIPTLFGGLSA</sequence>
<accession>Q8YE73</accession>
<comment type="catalytic activity">
    <reaction evidence="1">
        <text>tRNA(Phe) + L-phenylalanine + ATP = L-phenylalanyl-tRNA(Phe) + AMP + diphosphate + H(+)</text>
        <dbReference type="Rhea" id="RHEA:19413"/>
        <dbReference type="Rhea" id="RHEA-COMP:9668"/>
        <dbReference type="Rhea" id="RHEA-COMP:9699"/>
        <dbReference type="ChEBI" id="CHEBI:15378"/>
        <dbReference type="ChEBI" id="CHEBI:30616"/>
        <dbReference type="ChEBI" id="CHEBI:33019"/>
        <dbReference type="ChEBI" id="CHEBI:58095"/>
        <dbReference type="ChEBI" id="CHEBI:78442"/>
        <dbReference type="ChEBI" id="CHEBI:78531"/>
        <dbReference type="ChEBI" id="CHEBI:456215"/>
        <dbReference type="EC" id="6.1.1.20"/>
    </reaction>
</comment>
<comment type="cofactor">
    <cofactor evidence="1">
        <name>Mg(2+)</name>
        <dbReference type="ChEBI" id="CHEBI:18420"/>
    </cofactor>
    <text evidence="1">Binds 2 magnesium ions per tetramer.</text>
</comment>
<comment type="subunit">
    <text evidence="1">Tetramer of two alpha and two beta subunits.</text>
</comment>
<comment type="subcellular location">
    <subcellularLocation>
        <location evidence="1">Cytoplasm</location>
    </subcellularLocation>
</comment>
<comment type="similarity">
    <text evidence="1">Belongs to the class-II aminoacyl-tRNA synthetase family. Phe-tRNA synthetase alpha subunit type 1 subfamily.</text>
</comment>
<protein>
    <recommendedName>
        <fullName evidence="1">Phenylalanine--tRNA ligase alpha subunit</fullName>
        <ecNumber evidence="1">6.1.1.20</ecNumber>
    </recommendedName>
    <alternativeName>
        <fullName evidence="1">Phenylalanyl-tRNA synthetase alpha subunit</fullName>
        <shortName evidence="1">PheRS</shortName>
    </alternativeName>
</protein>
<evidence type="ECO:0000255" key="1">
    <source>
        <dbReference type="HAMAP-Rule" id="MF_00281"/>
    </source>
</evidence>
<gene>
    <name evidence="1" type="primary">pheS</name>
    <name type="ordered locus">BMEI2005</name>
</gene>
<reference key="1">
    <citation type="journal article" date="2002" name="Proc. Natl. Acad. Sci. U.S.A.">
        <title>The genome sequence of the facultative intracellular pathogen Brucella melitensis.</title>
        <authorList>
            <person name="DelVecchio V.G."/>
            <person name="Kapatral V."/>
            <person name="Redkar R.J."/>
            <person name="Patra G."/>
            <person name="Mujer C."/>
            <person name="Los T."/>
            <person name="Ivanova N."/>
            <person name="Anderson I."/>
            <person name="Bhattacharyya A."/>
            <person name="Lykidis A."/>
            <person name="Reznik G."/>
            <person name="Jablonski L."/>
            <person name="Larsen N."/>
            <person name="D'Souza M."/>
            <person name="Bernal A."/>
            <person name="Mazur M."/>
            <person name="Goltsman E."/>
            <person name="Selkov E."/>
            <person name="Elzer P.H."/>
            <person name="Hagius S."/>
            <person name="O'Callaghan D."/>
            <person name="Letesson J.-J."/>
            <person name="Haselkorn R."/>
            <person name="Kyrpides N.C."/>
            <person name="Overbeek R."/>
        </authorList>
    </citation>
    <scope>NUCLEOTIDE SEQUENCE [LARGE SCALE GENOMIC DNA]</scope>
    <source>
        <strain>ATCC 23456 / CCUG 17765 / NCTC 10094 / 16M</strain>
    </source>
</reference>
<keyword id="KW-0030">Aminoacyl-tRNA synthetase</keyword>
<keyword id="KW-0067">ATP-binding</keyword>
<keyword id="KW-0963">Cytoplasm</keyword>
<keyword id="KW-0436">Ligase</keyword>
<keyword id="KW-0460">Magnesium</keyword>
<keyword id="KW-0479">Metal-binding</keyword>
<keyword id="KW-0547">Nucleotide-binding</keyword>
<keyword id="KW-0648">Protein biosynthesis</keyword>
<dbReference type="EC" id="6.1.1.20" evidence="1"/>
<dbReference type="EMBL" id="AE008917">
    <property type="protein sequence ID" value="AAL53186.1"/>
    <property type="molecule type" value="Genomic_DNA"/>
</dbReference>
<dbReference type="PIR" id="AG3502">
    <property type="entry name" value="AG3502"/>
</dbReference>
<dbReference type="RefSeq" id="WP_004684561.1">
    <property type="nucleotide sequence ID" value="NZ_GG703778.1"/>
</dbReference>
<dbReference type="SMR" id="Q8YE73"/>
<dbReference type="GeneID" id="29594886"/>
<dbReference type="KEGG" id="bme:BMEI2005"/>
<dbReference type="KEGG" id="bmel:DK63_1486"/>
<dbReference type="PATRIC" id="fig|224914.52.peg.1566"/>
<dbReference type="eggNOG" id="COG0016">
    <property type="taxonomic scope" value="Bacteria"/>
</dbReference>
<dbReference type="PhylomeDB" id="Q8YE73"/>
<dbReference type="Proteomes" id="UP000000419">
    <property type="component" value="Chromosome I"/>
</dbReference>
<dbReference type="GO" id="GO:0005737">
    <property type="term" value="C:cytoplasm"/>
    <property type="evidence" value="ECO:0007669"/>
    <property type="project" value="UniProtKB-SubCell"/>
</dbReference>
<dbReference type="GO" id="GO:0005524">
    <property type="term" value="F:ATP binding"/>
    <property type="evidence" value="ECO:0007669"/>
    <property type="project" value="UniProtKB-UniRule"/>
</dbReference>
<dbReference type="GO" id="GO:0000287">
    <property type="term" value="F:magnesium ion binding"/>
    <property type="evidence" value="ECO:0007669"/>
    <property type="project" value="UniProtKB-UniRule"/>
</dbReference>
<dbReference type="GO" id="GO:0004826">
    <property type="term" value="F:phenylalanine-tRNA ligase activity"/>
    <property type="evidence" value="ECO:0007669"/>
    <property type="project" value="UniProtKB-UniRule"/>
</dbReference>
<dbReference type="GO" id="GO:0000049">
    <property type="term" value="F:tRNA binding"/>
    <property type="evidence" value="ECO:0007669"/>
    <property type="project" value="InterPro"/>
</dbReference>
<dbReference type="GO" id="GO:0006432">
    <property type="term" value="P:phenylalanyl-tRNA aminoacylation"/>
    <property type="evidence" value="ECO:0007669"/>
    <property type="project" value="UniProtKB-UniRule"/>
</dbReference>
<dbReference type="CDD" id="cd00496">
    <property type="entry name" value="PheRS_alpha_core"/>
    <property type="match status" value="1"/>
</dbReference>
<dbReference type="FunFam" id="3.30.930.10:FF:000003">
    <property type="entry name" value="Phenylalanine--tRNA ligase alpha subunit"/>
    <property type="match status" value="1"/>
</dbReference>
<dbReference type="Gene3D" id="3.30.930.10">
    <property type="entry name" value="Bira Bifunctional Protein, Domain 2"/>
    <property type="match status" value="1"/>
</dbReference>
<dbReference type="HAMAP" id="MF_00281">
    <property type="entry name" value="Phe_tRNA_synth_alpha1"/>
    <property type="match status" value="1"/>
</dbReference>
<dbReference type="InterPro" id="IPR006195">
    <property type="entry name" value="aa-tRNA-synth_II"/>
</dbReference>
<dbReference type="InterPro" id="IPR045864">
    <property type="entry name" value="aa-tRNA-synth_II/BPL/LPL"/>
</dbReference>
<dbReference type="InterPro" id="IPR004529">
    <property type="entry name" value="Phe-tRNA-synth_IIc_asu"/>
</dbReference>
<dbReference type="InterPro" id="IPR004188">
    <property type="entry name" value="Phe-tRNA_ligase_II_N"/>
</dbReference>
<dbReference type="InterPro" id="IPR022911">
    <property type="entry name" value="Phe_tRNA_ligase_alpha1_bac"/>
</dbReference>
<dbReference type="InterPro" id="IPR002319">
    <property type="entry name" value="Phenylalanyl-tRNA_Synthase"/>
</dbReference>
<dbReference type="InterPro" id="IPR010978">
    <property type="entry name" value="tRNA-bd_arm"/>
</dbReference>
<dbReference type="NCBIfam" id="TIGR00468">
    <property type="entry name" value="pheS"/>
    <property type="match status" value="1"/>
</dbReference>
<dbReference type="PANTHER" id="PTHR11538:SF41">
    <property type="entry name" value="PHENYLALANINE--TRNA LIGASE, MITOCHONDRIAL"/>
    <property type="match status" value="1"/>
</dbReference>
<dbReference type="PANTHER" id="PTHR11538">
    <property type="entry name" value="PHENYLALANYL-TRNA SYNTHETASE"/>
    <property type="match status" value="1"/>
</dbReference>
<dbReference type="Pfam" id="PF02912">
    <property type="entry name" value="Phe_tRNA-synt_N"/>
    <property type="match status" value="1"/>
</dbReference>
<dbReference type="Pfam" id="PF01409">
    <property type="entry name" value="tRNA-synt_2d"/>
    <property type="match status" value="1"/>
</dbReference>
<dbReference type="SUPFAM" id="SSF55681">
    <property type="entry name" value="Class II aaRS and biotin synthetases"/>
    <property type="match status" value="1"/>
</dbReference>
<dbReference type="SUPFAM" id="SSF46589">
    <property type="entry name" value="tRNA-binding arm"/>
    <property type="match status" value="1"/>
</dbReference>
<dbReference type="PROSITE" id="PS50862">
    <property type="entry name" value="AA_TRNA_LIGASE_II"/>
    <property type="match status" value="1"/>
</dbReference>
<feature type="chain" id="PRO_0000126674" description="Phenylalanine--tRNA ligase alpha subunit">
    <location>
        <begin position="1"/>
        <end position="369"/>
    </location>
</feature>
<feature type="binding site" evidence="1">
    <location>
        <position position="269"/>
    </location>
    <ligand>
        <name>Mg(2+)</name>
        <dbReference type="ChEBI" id="CHEBI:18420"/>
        <note>shared with beta subunit</note>
    </ligand>
</feature>